<feature type="chain" id="PRO_0000112240" description="ATP synthase subunit 9, mitochondrial">
    <location>
        <begin position="1"/>
        <end position="76"/>
    </location>
</feature>
<feature type="transmembrane region" description="Helical" evidence="2">
    <location>
        <begin position="14"/>
        <end position="34"/>
    </location>
</feature>
<feature type="transmembrane region" description="Helical" evidence="2">
    <location>
        <begin position="52"/>
        <end position="72"/>
    </location>
</feature>
<feature type="site" description="Reversibly protonated during proton transport" evidence="1">
    <location>
        <position position="59"/>
    </location>
</feature>
<feature type="modified residue" description="N-formylmethionine" evidence="3">
    <location>
        <position position="1"/>
    </location>
</feature>
<feature type="sequence variant" description="In strain: DS400/A3 and KL14-4A.">
    <original>T</original>
    <variation>L</variation>
    <location>
        <position position="46"/>
    </location>
</feature>
<feature type="sequence variant" description="In strain: DS400/A3, DS401 and oligomycin-resistant mutant.">
    <original>L</original>
    <variation>F</variation>
    <location>
        <position position="53"/>
    </location>
</feature>
<feature type="sequence variant" description="In oligomycin-resistant mutant and cross-resistance to venturicidin.">
    <original>L</original>
    <variation>V</variation>
    <location>
        <position position="57"/>
    </location>
</feature>
<feature type="sequence variant" description="In oligomycin-resistant mutant.">
    <original>C</original>
    <variation>S</variation>
    <location>
        <position position="65"/>
    </location>
</feature>
<feature type="helix" evidence="5">
    <location>
        <begin position="2"/>
        <end position="14"/>
    </location>
</feature>
<feature type="helix" evidence="5">
    <location>
        <begin position="15"/>
        <end position="18"/>
    </location>
</feature>
<feature type="helix" evidence="5">
    <location>
        <begin position="19"/>
        <end position="39"/>
    </location>
</feature>
<feature type="helix" evidence="5">
    <location>
        <begin position="41"/>
        <end position="43"/>
    </location>
</feature>
<feature type="helix" evidence="5">
    <location>
        <begin position="44"/>
        <end position="73"/>
    </location>
</feature>
<sequence>MQLVLAAKYIGAGISTIGLLGAGIGIAIVFAALINGVSRNPSIKDTVFPMAILGFALSEATGLFCLMVSFLLLFGV</sequence>
<reference key="1">
    <citation type="book" date="1979" name="Function and molecular aspects of biomembrane transport">
        <title>Amino acid sequence of the ATPase proteolipid from mitochondria, chloroplasts and bacteria (wild type and mutants).</title>
        <editorList>
            <person name="Quagliariello E."/>
            <person name="Palmieri F."/>
            <person name="Papa S."/>
            <person name="Klingenberg M."/>
        </editorList>
        <authorList>
            <person name="Sebald W."/>
            <person name="Hoppe J."/>
            <person name="Wachter E."/>
        </authorList>
    </citation>
    <scope>PROTEIN SEQUENCE</scope>
</reference>
<reference key="2">
    <citation type="journal article" date="1979" name="Proc. Natl. Acad. Sci. U.S.A.">
        <title>Nucleotide sequence of the mitochondrial structural gene for subunit 9 of yeast ATPase complex.</title>
        <authorList>
            <person name="Hensgens L.A.M."/>
            <person name="Grivell L.A."/>
            <person name="Borst P."/>
            <person name="Bos J.L."/>
        </authorList>
    </citation>
    <scope>NUCLEOTIDE SEQUENCE [GENOMIC DNA]</scope>
    <source>
        <strain>KL14-4A</strain>
    </source>
</reference>
<reference key="3">
    <citation type="book" date="1979" name="Extrachromosomal DNA">
        <title>Organization of mitochondrial DNA in yeast.</title>
        <editorList>
            <person name="Cummings D.J."/>
            <person name="Brost P."/>
            <person name="Dawid I.B."/>
            <person name="Weissman S.M."/>
            <person name="Fox C.F."/>
        </editorList>
        <authorList>
            <person name="Tzagoloff A."/>
            <person name="Macino G."/>
            <person name="Nobrega M.P."/>
            <person name="Li M."/>
        </authorList>
    </citation>
    <scope>NUCLEOTIDE SEQUENCE [GENOMIC DNA]</scope>
    <source>
        <strain>DS401</strain>
    </source>
</reference>
<reference key="4">
    <citation type="journal article" date="1979" name="J. Biol. Chem.">
        <title>Assembly of the mitochondrial membrane system. The DNA sequence of a mitochondrial ATPase gene in Saccharomyces cerevisiae.</title>
        <authorList>
            <person name="Macino G."/>
            <person name="Tzagoloff A."/>
        </authorList>
    </citation>
    <scope>NUCLEOTIDE SEQUENCE [GENOMIC DNA]</scope>
    <source>
        <strain>DS400/A3</strain>
    </source>
</reference>
<reference key="5">
    <citation type="journal article" date="1985" name="Nucleic Acids Res.">
        <title>Biogenesis of mitochondria: DNA sequence analysis of mit- mutations in the mitochondrial oli1 gene coding for mitochondrial ATPase subunit 9 in Saccharomyces cerevisiae.</title>
        <authorList>
            <person name="Ooi B.G."/>
            <person name="McMullen G.L."/>
            <person name="Linnane A.W."/>
            <person name="Nagley P."/>
            <person name="Novitski C.E."/>
        </authorList>
    </citation>
    <scope>NUCLEOTIDE SEQUENCE [GENOMIC DNA]</scope>
</reference>
<reference key="6">
    <citation type="journal article" date="1998" name="FEBS Lett.">
        <title>The complete sequence of the mitochondrial genome of Saccharomyces cerevisiae.</title>
        <authorList>
            <person name="Foury F."/>
            <person name="Roganti T."/>
            <person name="Lecrenier N."/>
            <person name="Purnelle B."/>
        </authorList>
    </citation>
    <scope>NUCLEOTIDE SEQUENCE [LARGE SCALE GENOMIC DNA]</scope>
    <source>
        <strain>ATCC 96604 / S288c / FY1679</strain>
    </source>
</reference>
<reference key="7">
    <citation type="journal article" date="2014" name="G3 (Bethesda)">
        <title>The reference genome sequence of Saccharomyces cerevisiae: Then and now.</title>
        <authorList>
            <person name="Engel S.R."/>
            <person name="Dietrich F.S."/>
            <person name="Fisk D.G."/>
            <person name="Binkley G."/>
            <person name="Balakrishnan R."/>
            <person name="Costanzo M.C."/>
            <person name="Dwight S.S."/>
            <person name="Hitz B.C."/>
            <person name="Karra K."/>
            <person name="Nash R.S."/>
            <person name="Weng S."/>
            <person name="Wong E.D."/>
            <person name="Lloyd P."/>
            <person name="Skrzypek M.S."/>
            <person name="Miyasato S.R."/>
            <person name="Simison M."/>
            <person name="Cherry J.M."/>
        </authorList>
    </citation>
    <scope>GENOME REANNOTATION</scope>
    <source>
        <strain>ATCC 96604 / S288c / FY1679</strain>
    </source>
</reference>
<reference key="8">
    <citation type="journal article" date="1988" name="Eur. J. Biochem.">
        <title>NH2-terminal sequence of the isolated yeast ATP synthase subunit 6 reveals post-translational cleavage.</title>
        <authorList>
            <person name="Michon T."/>
            <person name="Galante M."/>
            <person name="Velours J."/>
        </authorList>
    </citation>
    <scope>PROTEIN SEQUENCE OF 1-8</scope>
    <scope>FORMYLATION AT MET-1</scope>
</reference>
<reference key="9">
    <citation type="journal article" date="1999" name="Science">
        <title>Molecular architecture of the rotary motor in ATP synthase.</title>
        <authorList>
            <person name="Stock D."/>
            <person name="Leslie A.G."/>
            <person name="Walker J.E."/>
        </authorList>
    </citation>
    <scope>3D-STRUCTURE MODELING</scope>
</reference>
<protein>
    <recommendedName>
        <fullName>ATP synthase subunit 9, mitochondrial</fullName>
    </recommendedName>
    <alternativeName>
        <fullName>Lipid-binding protein</fullName>
    </alternativeName>
    <alternativeName>
        <fullName>Oligomycin resistance protein 1</fullName>
    </alternativeName>
</protein>
<accession>P61829</accession>
<accession>A0A0A7P075</accession>
<accession>P00841</accession>
<accession>Q37750</accession>
<dbReference type="EMBL" id="AH001281">
    <property type="protein sequence ID" value="AAA32146.1"/>
    <property type="molecule type" value="Genomic_DNA"/>
</dbReference>
<dbReference type="EMBL" id="J01462">
    <property type="protein sequence ID" value="AAA32169.1"/>
    <property type="molecule type" value="Genomic_DNA"/>
</dbReference>
<dbReference type="EMBL" id="V00707">
    <property type="protein sequence ID" value="CAA24079.1"/>
    <property type="molecule type" value="Genomic_DNA"/>
</dbReference>
<dbReference type="EMBL" id="L36899">
    <property type="protein sequence ID" value="AAA67535.1"/>
    <property type="molecule type" value="Genomic_DNA"/>
</dbReference>
<dbReference type="EMBL" id="X03968">
    <property type="protein sequence ID" value="CAA27605.1"/>
    <property type="molecule type" value="Genomic_DNA"/>
</dbReference>
<dbReference type="EMBL" id="KP263414">
    <property type="protein sequence ID" value="AIZ98894.1"/>
    <property type="molecule type" value="Genomic_DNA"/>
</dbReference>
<dbReference type="PIR" id="A23024">
    <property type="entry name" value="LWBYA"/>
</dbReference>
<dbReference type="RefSeq" id="NP_009319.1">
    <property type="nucleotide sequence ID" value="NC_001224.1"/>
</dbReference>
<dbReference type="RefSeq" id="YP_009144710.1">
    <property type="nucleotide sequence ID" value="NC_027264.1"/>
</dbReference>
<dbReference type="PDB" id="2WPD">
    <property type="method" value="X-ray"/>
    <property type="resolution" value="3.43 A"/>
    <property type="chains" value="J/K/L/M/N/O/P/Q/R/S=1-76"/>
</dbReference>
<dbReference type="PDB" id="2XOK">
    <property type="method" value="X-ray"/>
    <property type="resolution" value="3.01 A"/>
    <property type="chains" value="K/L/M/N/O/P/Q/R/S/T=1-76"/>
</dbReference>
<dbReference type="PDB" id="3U2F">
    <property type="method" value="X-ray"/>
    <property type="resolution" value="2.00 A"/>
    <property type="chains" value="K/L/M/N/O=1-76"/>
</dbReference>
<dbReference type="PDB" id="3U2Y">
    <property type="method" value="X-ray"/>
    <property type="resolution" value="2.50 A"/>
    <property type="chains" value="K/L/M/N/O=1-76"/>
</dbReference>
<dbReference type="PDB" id="3U32">
    <property type="method" value="X-ray"/>
    <property type="resolution" value="2.00 A"/>
    <property type="chains" value="K/L/M/N/O=1-76"/>
</dbReference>
<dbReference type="PDB" id="3UD0">
    <property type="method" value="X-ray"/>
    <property type="resolution" value="2.00 A"/>
    <property type="chains" value="K/L/M/N/O=1-76"/>
</dbReference>
<dbReference type="PDB" id="3ZRY">
    <property type="method" value="X-ray"/>
    <property type="resolution" value="6.50 A"/>
    <property type="chains" value="J/K/L/M/N/O/P/Q/R/S=1-76"/>
</dbReference>
<dbReference type="PDB" id="4B2Q">
    <property type="method" value="EM"/>
    <property type="resolution" value="37.00 A"/>
    <property type="chains" value="J/K/L/M/N/O/P/Q/R/S/j/k/l/m/n/o/p/q/r/s=1-76"/>
</dbReference>
<dbReference type="PDB" id="4F4S">
    <property type="method" value="X-ray"/>
    <property type="resolution" value="1.90 A"/>
    <property type="chains" value="A/B/C/D/E/K/L/M/N/O=1-76"/>
</dbReference>
<dbReference type="PDB" id="5BPS">
    <property type="method" value="X-ray"/>
    <property type="resolution" value="2.10 A"/>
    <property type="chains" value="A/B/C/D/E/K/L/M/N/O=1-76"/>
</dbReference>
<dbReference type="PDB" id="5BQ6">
    <property type="method" value="X-ray"/>
    <property type="resolution" value="2.30 A"/>
    <property type="chains" value="A/B/C/D/E/K/L/M/N/O=1-76"/>
</dbReference>
<dbReference type="PDB" id="5BQA">
    <property type="method" value="X-ray"/>
    <property type="resolution" value="2.10 A"/>
    <property type="chains" value="A/B/C/D/E/K/L/M/N/O=1-76"/>
</dbReference>
<dbReference type="PDB" id="5BQJ">
    <property type="method" value="X-ray"/>
    <property type="resolution" value="2.10 A"/>
    <property type="chains" value="A/B/C/D/E/K/L/M/N/O=1-76"/>
</dbReference>
<dbReference type="PDB" id="6B2Z">
    <property type="method" value="EM"/>
    <property type="resolution" value="3.60 A"/>
    <property type="chains" value="0/1/2/3/4/5/6/7/8/9/B/C/D/E/F/G/H/I/J/K=1-76"/>
</dbReference>
<dbReference type="PDB" id="6B8H">
    <property type="method" value="EM"/>
    <property type="resolution" value="3.60 A"/>
    <property type="chains" value="0/1/2/3/4/5/6/7/8/9/J/L/M/N/P/Q/R/S/T/U=1-76"/>
</dbReference>
<dbReference type="PDB" id="6CP3">
    <property type="method" value="EM"/>
    <property type="resolution" value="3.80 A"/>
    <property type="chains" value="K/L/M/N/O/P/Q/R/S/T=1-76"/>
</dbReference>
<dbReference type="PDB" id="6CP5">
    <property type="method" value="EM"/>
    <property type="resolution" value="4.20 A"/>
    <property type="chains" value="K/L/M/N/O/P/Q/R/S/T=1-76"/>
</dbReference>
<dbReference type="PDB" id="6CP6">
    <property type="method" value="EM"/>
    <property type="resolution" value="3.60 A"/>
    <property type="chains" value="K/L/M/N/O/P/Q/R/S/T=1-76"/>
</dbReference>
<dbReference type="PDB" id="6CP7">
    <property type="method" value="EM"/>
    <property type="resolution" value="4.10 A"/>
    <property type="chains" value="K/L/M/N/O/P/Q/R/S/T=1-76"/>
</dbReference>
<dbReference type="PDB" id="6WTD">
    <property type="method" value="EM"/>
    <property type="resolution" value="4.20 A"/>
    <property type="chains" value="K/L/M/N/O/P/Q/R/S/T=1-76"/>
</dbReference>
<dbReference type="PDB" id="7TJZ">
    <property type="method" value="EM"/>
    <property type="resolution" value="4.40 A"/>
    <property type="chains" value="0/1/2/3/4/5/6/7/8/9=1-76"/>
</dbReference>
<dbReference type="PDB" id="7TK1">
    <property type="method" value="EM"/>
    <property type="resolution" value="7.10 A"/>
    <property type="chains" value="0/1/2/3/4/5/6/7/8/9=1-76"/>
</dbReference>
<dbReference type="PDB" id="7TK2">
    <property type="method" value="EM"/>
    <property type="resolution" value="6.50 A"/>
    <property type="chains" value="0/1/2/3/4/5/6/7/8/9=1-76"/>
</dbReference>
<dbReference type="PDB" id="7TK3">
    <property type="method" value="EM"/>
    <property type="resolution" value="6.30 A"/>
    <property type="chains" value="0/1/2/3/4/5/6/7/8/9=1-76"/>
</dbReference>
<dbReference type="PDB" id="7TK4">
    <property type="method" value="EM"/>
    <property type="resolution" value="7.00 A"/>
    <property type="chains" value="0/1/2/3/4/5/6/7/8/9=1-76"/>
</dbReference>
<dbReference type="PDB" id="7TK5">
    <property type="method" value="EM"/>
    <property type="resolution" value="7.80 A"/>
    <property type="chains" value="0/1/2/3/4/5/6/7/8/9=1-76"/>
</dbReference>
<dbReference type="PDB" id="7TK6">
    <property type="method" value="EM"/>
    <property type="resolution" value="6.50 A"/>
    <property type="chains" value="0/1/2/3/4/5/6/7/8/9=1-76"/>
</dbReference>
<dbReference type="PDB" id="7TK7">
    <property type="method" value="EM"/>
    <property type="resolution" value="6.70 A"/>
    <property type="chains" value="0/1/2/3/4/5/6/7/8/9=1-76"/>
</dbReference>
<dbReference type="PDB" id="7TK8">
    <property type="method" value="EM"/>
    <property type="resolution" value="4.70 A"/>
    <property type="chains" value="0/1/2/3/4/5/6/7/8/9=1-76"/>
</dbReference>
<dbReference type="PDB" id="7TK9">
    <property type="method" value="EM"/>
    <property type="resolution" value="6.00 A"/>
    <property type="chains" value="0/1/2/3/4/5/6/7/8/9=1-76"/>
</dbReference>
<dbReference type="PDB" id="7TKA">
    <property type="method" value="EM"/>
    <property type="resolution" value="7.10 A"/>
    <property type="chains" value="0/1/2/3/4/5/6/7/8/9=1-76"/>
</dbReference>
<dbReference type="PDB" id="7TKB">
    <property type="method" value="EM"/>
    <property type="resolution" value="6.30 A"/>
    <property type="chains" value="0/1/2/3/4/5/6/7/8/9=1-76"/>
</dbReference>
<dbReference type="PDB" id="7TKC">
    <property type="method" value="EM"/>
    <property type="resolution" value="5.80 A"/>
    <property type="chains" value="0/1/2/3/4/5/6/7/8/9=1-76"/>
</dbReference>
<dbReference type="PDB" id="7TKD">
    <property type="method" value="EM"/>
    <property type="resolution" value="7.70 A"/>
    <property type="chains" value="0/1/2/3/4/5/6/7/8/9=1-76"/>
</dbReference>
<dbReference type="PDB" id="7TKE">
    <property type="method" value="EM"/>
    <property type="resolution" value="7.10 A"/>
    <property type="chains" value="0/1/2/3/4/5/6/7/8/9=1-76"/>
</dbReference>
<dbReference type="PDB" id="7TKF">
    <property type="method" value="EM"/>
    <property type="resolution" value="7.10 A"/>
    <property type="chains" value="0/1/2/3/4/5/6/7/8/9=1-76"/>
</dbReference>
<dbReference type="PDB" id="7TKG">
    <property type="method" value="EM"/>
    <property type="resolution" value="4.50 A"/>
    <property type="chains" value="0/1/2/3/4/5/6/7/8/9=1-76"/>
</dbReference>
<dbReference type="PDB" id="7TKH">
    <property type="method" value="EM"/>
    <property type="resolution" value="4.40 A"/>
    <property type="chains" value="0/1/2/3/4/5/6/7/8/9=1-76"/>
</dbReference>
<dbReference type="PDB" id="7TKI">
    <property type="method" value="EM"/>
    <property type="resolution" value="7.10 A"/>
    <property type="chains" value="0/1/2/3/4/5/6/7/8/9=1-76"/>
</dbReference>
<dbReference type="PDB" id="7TKJ">
    <property type="method" value="EM"/>
    <property type="resolution" value="7.50 A"/>
    <property type="chains" value="0/1/2/3/4/5/6/7/8/9=1-76"/>
</dbReference>
<dbReference type="PDB" id="7TKK">
    <property type="method" value="EM"/>
    <property type="resolution" value="7.30 A"/>
    <property type="chains" value="0/1/2/3/4/5/6/7/8/9=1-76"/>
</dbReference>
<dbReference type="PDB" id="7TKL">
    <property type="method" value="EM"/>
    <property type="resolution" value="6.40 A"/>
    <property type="chains" value="0/1/2/3/4/5/6/7/8/9=1-76"/>
</dbReference>
<dbReference type="PDB" id="7TKM">
    <property type="method" value="EM"/>
    <property type="resolution" value="4.50 A"/>
    <property type="chains" value="0/1/2/3/4/5/6/7/8/9=1-76"/>
</dbReference>
<dbReference type="PDB" id="7TKN">
    <property type="method" value="EM"/>
    <property type="resolution" value="7.10 A"/>
    <property type="chains" value="0/1/2/3/4/5/6/7/8/9=1-76"/>
</dbReference>
<dbReference type="PDB" id="7TKO">
    <property type="method" value="EM"/>
    <property type="resolution" value="4.80 A"/>
    <property type="chains" value="0/1/2/3/4/5/6/7/8/9=1-76"/>
</dbReference>
<dbReference type="PDB" id="7TKP">
    <property type="method" value="EM"/>
    <property type="resolution" value="4.60 A"/>
    <property type="chains" value="0/1/2/3/4/5/6/7/8/9=1-76"/>
</dbReference>
<dbReference type="PDB" id="7TKQ">
    <property type="method" value="EM"/>
    <property type="resolution" value="4.50 A"/>
    <property type="chains" value="0/1/2/3/4/5/6/7/8/9=1-76"/>
</dbReference>
<dbReference type="PDB" id="7TKR">
    <property type="method" value="EM"/>
    <property type="resolution" value="6.50 A"/>
    <property type="chains" value="0/1/2/3/4/5/6/7/8/9=1-76"/>
</dbReference>
<dbReference type="PDB" id="7TKS">
    <property type="method" value="EM"/>
    <property type="resolution" value="7.50 A"/>
    <property type="chains" value="0/1/2/3/4/5/6/7/8/9=1-76"/>
</dbReference>
<dbReference type="PDB" id="8F29">
    <property type="method" value="EM"/>
    <property type="resolution" value="4.00 A"/>
    <property type="chains" value="K/L/M/N/O/P/Q/R/S/T=1-75"/>
</dbReference>
<dbReference type="PDB" id="8F39">
    <property type="method" value="EM"/>
    <property type="resolution" value="3.50 A"/>
    <property type="chains" value="K/L/M/N/O/P/Q/R/S/T=1-75"/>
</dbReference>
<dbReference type="PDB" id="8FKJ">
    <property type="method" value="EM"/>
    <property type="resolution" value="4.20 A"/>
    <property type="chains" value="K/L/M/N/O/P/Q/R/S/T=2-75"/>
</dbReference>
<dbReference type="PDB" id="8FL8">
    <property type="method" value="EM"/>
    <property type="resolution" value="4.20 A"/>
    <property type="chains" value="K/L/M/N/O/P/Q/R/S/T=1-75"/>
</dbReference>
<dbReference type="PDBsum" id="2WPD"/>
<dbReference type="PDBsum" id="2XOK"/>
<dbReference type="PDBsum" id="3U2F"/>
<dbReference type="PDBsum" id="3U2Y"/>
<dbReference type="PDBsum" id="3U32"/>
<dbReference type="PDBsum" id="3UD0"/>
<dbReference type="PDBsum" id="3ZRY"/>
<dbReference type="PDBsum" id="4B2Q"/>
<dbReference type="PDBsum" id="4F4S"/>
<dbReference type="PDBsum" id="5BPS"/>
<dbReference type="PDBsum" id="5BQ6"/>
<dbReference type="PDBsum" id="5BQA"/>
<dbReference type="PDBsum" id="5BQJ"/>
<dbReference type="PDBsum" id="6B2Z"/>
<dbReference type="PDBsum" id="6B8H"/>
<dbReference type="PDBsum" id="6CP3"/>
<dbReference type="PDBsum" id="6CP5"/>
<dbReference type="PDBsum" id="6CP6"/>
<dbReference type="PDBsum" id="6CP7"/>
<dbReference type="PDBsum" id="6WTD"/>
<dbReference type="PDBsum" id="7TJZ"/>
<dbReference type="PDBsum" id="7TK1"/>
<dbReference type="PDBsum" id="7TK2"/>
<dbReference type="PDBsum" id="7TK3"/>
<dbReference type="PDBsum" id="7TK4"/>
<dbReference type="PDBsum" id="7TK5"/>
<dbReference type="PDBsum" id="7TK6"/>
<dbReference type="PDBsum" id="7TK7"/>
<dbReference type="PDBsum" id="7TK8"/>
<dbReference type="PDBsum" id="7TK9"/>
<dbReference type="PDBsum" id="7TKA"/>
<dbReference type="PDBsum" id="7TKB"/>
<dbReference type="PDBsum" id="7TKC"/>
<dbReference type="PDBsum" id="7TKD"/>
<dbReference type="PDBsum" id="7TKE"/>
<dbReference type="PDBsum" id="7TKF"/>
<dbReference type="PDBsum" id="7TKG"/>
<dbReference type="PDBsum" id="7TKH"/>
<dbReference type="PDBsum" id="7TKI"/>
<dbReference type="PDBsum" id="7TKJ"/>
<dbReference type="PDBsum" id="7TKK"/>
<dbReference type="PDBsum" id="7TKL"/>
<dbReference type="PDBsum" id="7TKM"/>
<dbReference type="PDBsum" id="7TKN"/>
<dbReference type="PDBsum" id="7TKO"/>
<dbReference type="PDBsum" id="7TKP"/>
<dbReference type="PDBsum" id="7TKQ"/>
<dbReference type="PDBsum" id="7TKR"/>
<dbReference type="PDBsum" id="7TKS"/>
<dbReference type="PDBsum" id="8F29"/>
<dbReference type="PDBsum" id="8F39"/>
<dbReference type="PDBsum" id="8FKJ"/>
<dbReference type="PDBsum" id="8FL8"/>
<dbReference type="EMDB" id="EMD-21894"/>
<dbReference type="EMDB" id="EMD-25954"/>
<dbReference type="EMDB" id="EMD-25955"/>
<dbReference type="EMDB" id="EMD-25956"/>
<dbReference type="EMDB" id="EMD-25957"/>
<dbReference type="EMDB" id="EMD-25958"/>
<dbReference type="EMDB" id="EMD-25959"/>
<dbReference type="EMDB" id="EMD-25960"/>
<dbReference type="EMDB" id="EMD-25961"/>
<dbReference type="EMDB" id="EMD-25962"/>
<dbReference type="EMDB" id="EMD-25963"/>
<dbReference type="EMDB" id="EMD-25964"/>
<dbReference type="EMDB" id="EMD-25965"/>
<dbReference type="EMDB" id="EMD-25966"/>
<dbReference type="EMDB" id="EMD-25967"/>
<dbReference type="EMDB" id="EMD-25968"/>
<dbReference type="EMDB" id="EMD-25969"/>
<dbReference type="EMDB" id="EMD-25970"/>
<dbReference type="EMDB" id="EMD-25971"/>
<dbReference type="EMDB" id="EMD-25972"/>
<dbReference type="EMDB" id="EMD-25973"/>
<dbReference type="EMDB" id="EMD-25974"/>
<dbReference type="EMDB" id="EMD-25975"/>
<dbReference type="EMDB" id="EMD-25976"/>
<dbReference type="EMDB" id="EMD-25977"/>
<dbReference type="EMDB" id="EMD-25978"/>
<dbReference type="EMDB" id="EMD-25979"/>
<dbReference type="EMDB" id="EMD-25980"/>
<dbReference type="EMDB" id="EMD-28809"/>
<dbReference type="EMDB" id="EMD-28835"/>
<dbReference type="EMDB" id="EMD-7036"/>
<dbReference type="EMDB" id="EMD-7546"/>
<dbReference type="EMDB" id="EMD-7547"/>
<dbReference type="EMDB" id="EMD-7548"/>
<dbReference type="EMDB" id="EMD-7549"/>
<dbReference type="SMR" id="P61829"/>
<dbReference type="BioGRID" id="34780">
    <property type="interactions" value="14"/>
</dbReference>
<dbReference type="ComplexPortal" id="CPX-3281">
    <property type="entry name" value="Mitochondrial proton-transporting ATP synthase complex"/>
</dbReference>
<dbReference type="DIP" id="DIP-3041N"/>
<dbReference type="FunCoup" id="P61829">
    <property type="interactions" value="1218"/>
</dbReference>
<dbReference type="IntAct" id="P61829">
    <property type="interactions" value="2"/>
</dbReference>
<dbReference type="STRING" id="4932.Q0130"/>
<dbReference type="TCDB" id="3.A.2.1.3">
    <property type="family name" value="the h+- or na+-translocating f-type, v-type and a-type atpase (f-atpase) superfamily"/>
</dbReference>
<dbReference type="PaxDb" id="4932-Q0130"/>
<dbReference type="PeptideAtlas" id="P61829"/>
<dbReference type="EnsemblFungi" id="Q0130_mRNA">
    <property type="protein sequence ID" value="Q0130"/>
    <property type="gene ID" value="Q0130"/>
</dbReference>
<dbReference type="GeneID" id="24573116"/>
<dbReference type="GeneID" id="854584"/>
<dbReference type="KEGG" id="sce:Q0130"/>
<dbReference type="AGR" id="SGD:S000007274"/>
<dbReference type="SGD" id="S000007274">
    <property type="gene designation" value="OLI1"/>
</dbReference>
<dbReference type="VEuPathDB" id="FungiDB:Q0130"/>
<dbReference type="eggNOG" id="KOG3025">
    <property type="taxonomic scope" value="Eukaryota"/>
</dbReference>
<dbReference type="GeneTree" id="ENSGT00940000176138"/>
<dbReference type="HOGENOM" id="CLU_148047_4_1_1"/>
<dbReference type="InParanoid" id="P61829"/>
<dbReference type="OMA" id="YIFGKMI"/>
<dbReference type="OrthoDB" id="438052at2759"/>
<dbReference type="BioCyc" id="YEAST:G3O-34383-MONOMER"/>
<dbReference type="BioGRID-ORCS" id="854584">
    <property type="hits" value="0 hits in 10 CRISPR screens"/>
</dbReference>
<dbReference type="EvolutionaryTrace" id="P61829"/>
<dbReference type="PRO" id="PR:P61829"/>
<dbReference type="Proteomes" id="UP000002311">
    <property type="component" value="Mitochondrion"/>
</dbReference>
<dbReference type="RNAct" id="P61829">
    <property type="molecule type" value="protein"/>
</dbReference>
<dbReference type="GO" id="GO:0005829">
    <property type="term" value="C:cytosol"/>
    <property type="evidence" value="ECO:0000304"/>
    <property type="project" value="Reactome"/>
</dbReference>
<dbReference type="GO" id="GO:0005743">
    <property type="term" value="C:mitochondrial inner membrane"/>
    <property type="evidence" value="ECO:0000314"/>
    <property type="project" value="ComplexPortal"/>
</dbReference>
<dbReference type="GO" id="GO:0005758">
    <property type="term" value="C:mitochondrial intermembrane space"/>
    <property type="evidence" value="ECO:0000304"/>
    <property type="project" value="Reactome"/>
</dbReference>
<dbReference type="GO" id="GO:0005739">
    <property type="term" value="C:mitochondrion"/>
    <property type="evidence" value="ECO:0007005"/>
    <property type="project" value="SGD"/>
</dbReference>
<dbReference type="GO" id="GO:0045259">
    <property type="term" value="C:proton-transporting ATP synthase complex"/>
    <property type="evidence" value="ECO:0000353"/>
    <property type="project" value="SGD"/>
</dbReference>
<dbReference type="GO" id="GO:0033177">
    <property type="term" value="C:proton-transporting two-sector ATPase complex, proton-transporting domain"/>
    <property type="evidence" value="ECO:0007669"/>
    <property type="project" value="InterPro"/>
</dbReference>
<dbReference type="GO" id="GO:0042802">
    <property type="term" value="F:identical protein binding"/>
    <property type="evidence" value="ECO:0000353"/>
    <property type="project" value="IntAct"/>
</dbReference>
<dbReference type="GO" id="GO:0008289">
    <property type="term" value="F:lipid binding"/>
    <property type="evidence" value="ECO:0007669"/>
    <property type="project" value="UniProtKB-KW"/>
</dbReference>
<dbReference type="GO" id="GO:0015078">
    <property type="term" value="F:proton transmembrane transporter activity"/>
    <property type="evidence" value="ECO:0007669"/>
    <property type="project" value="InterPro"/>
</dbReference>
<dbReference type="GO" id="GO:0015986">
    <property type="term" value="P:proton motive force-driven ATP synthesis"/>
    <property type="evidence" value="ECO:0000314"/>
    <property type="project" value="ComplexPortal"/>
</dbReference>
<dbReference type="CDD" id="cd18182">
    <property type="entry name" value="ATP-synt_Fo_c_ATP5G3"/>
    <property type="match status" value="1"/>
</dbReference>
<dbReference type="FunFam" id="1.20.20.10:FF:000014">
    <property type="entry name" value="ATP synthase subunit 9, mitochondrial"/>
    <property type="match status" value="1"/>
</dbReference>
<dbReference type="Gene3D" id="1.20.20.10">
    <property type="entry name" value="F1F0 ATP synthase subunit C"/>
    <property type="match status" value="1"/>
</dbReference>
<dbReference type="HAMAP" id="MF_01396">
    <property type="entry name" value="ATP_synth_c_bact"/>
    <property type="match status" value="1"/>
</dbReference>
<dbReference type="InterPro" id="IPR000454">
    <property type="entry name" value="ATP_synth_F0_csu"/>
</dbReference>
<dbReference type="InterPro" id="IPR020537">
    <property type="entry name" value="ATP_synth_F0_csu_DDCD_BS"/>
</dbReference>
<dbReference type="InterPro" id="IPR038662">
    <property type="entry name" value="ATP_synth_F0_csu_sf"/>
</dbReference>
<dbReference type="InterPro" id="IPR002379">
    <property type="entry name" value="ATPase_proteolipid_c-like_dom"/>
</dbReference>
<dbReference type="InterPro" id="IPR035921">
    <property type="entry name" value="F/V-ATP_Csub_sf"/>
</dbReference>
<dbReference type="PANTHER" id="PTHR10031">
    <property type="entry name" value="ATP SYNTHASE LIPID-BINDING PROTEIN, MITOCHONDRIAL"/>
    <property type="match status" value="1"/>
</dbReference>
<dbReference type="PANTHER" id="PTHR10031:SF0">
    <property type="entry name" value="ATPASE PROTEIN 9"/>
    <property type="match status" value="1"/>
</dbReference>
<dbReference type="Pfam" id="PF00137">
    <property type="entry name" value="ATP-synt_C"/>
    <property type="match status" value="1"/>
</dbReference>
<dbReference type="PRINTS" id="PR00124">
    <property type="entry name" value="ATPASEC"/>
</dbReference>
<dbReference type="SUPFAM" id="SSF81333">
    <property type="entry name" value="F1F0 ATP synthase subunit C"/>
    <property type="match status" value="1"/>
</dbReference>
<dbReference type="PROSITE" id="PS00605">
    <property type="entry name" value="ATPASE_C"/>
    <property type="match status" value="1"/>
</dbReference>
<proteinExistence type="evidence at protein level"/>
<keyword id="KW-0002">3D-structure</keyword>
<keyword id="KW-0138">CF(0)</keyword>
<keyword id="KW-0903">Direct protein sequencing</keyword>
<keyword id="KW-0291">Formylation</keyword>
<keyword id="KW-0375">Hydrogen ion transport</keyword>
<keyword id="KW-0406">Ion transport</keyword>
<keyword id="KW-0446">Lipid-binding</keyword>
<keyword id="KW-0472">Membrane</keyword>
<keyword id="KW-0496">Mitochondrion</keyword>
<keyword id="KW-1185">Reference proteome</keyword>
<keyword id="KW-0812">Transmembrane</keyword>
<keyword id="KW-1133">Transmembrane helix</keyword>
<keyword id="KW-0813">Transport</keyword>
<geneLocation type="mitochondrion"/>
<gene>
    <name type="primary">OLI1</name>
    <name type="synonym">ATP9</name>
    <name type="synonym">OLI3</name>
    <name type="synonym">PHO2</name>
    <name type="ordered locus">Q0130</name>
</gene>
<name>ATP9_YEAST</name>
<organism>
    <name type="scientific">Saccharomyces cerevisiae (strain ATCC 204508 / S288c)</name>
    <name type="common">Baker's yeast</name>
    <dbReference type="NCBI Taxonomy" id="559292"/>
    <lineage>
        <taxon>Eukaryota</taxon>
        <taxon>Fungi</taxon>
        <taxon>Dikarya</taxon>
        <taxon>Ascomycota</taxon>
        <taxon>Saccharomycotina</taxon>
        <taxon>Saccharomycetes</taxon>
        <taxon>Saccharomycetales</taxon>
        <taxon>Saccharomycetaceae</taxon>
        <taxon>Saccharomyces</taxon>
    </lineage>
</organism>
<evidence type="ECO:0000250" key="1"/>
<evidence type="ECO:0000255" key="2"/>
<evidence type="ECO:0000269" key="3">
    <source>
    </source>
</evidence>
<evidence type="ECO:0000305" key="4"/>
<evidence type="ECO:0007829" key="5">
    <source>
        <dbReference type="PDB" id="4F4S"/>
    </source>
</evidence>
<comment type="function">
    <text>Mitochondrial membrane ATP synthase (F(1)F(0) ATP synthase or Complex V) produces ATP from ADP in the presence of a proton gradient across the membrane which is generated by electron transport complexes of the respiratory chain. F-type ATPases consist of two structural domains, F(1) - containing the extramembraneous catalytic core and F(0) - containing the membrane proton channel, linked together by a central stalk and a peripheral stalk. During catalysis, ATP synthesis in the catalytic domain of F(1) is coupled via a rotary mechanism of the central stalk subunits to proton translocation. Part of the complex F(0) domain. A homomeric c-ring of probably 10 subunits is part of the complex rotary element.</text>
</comment>
<comment type="subunit">
    <text>F-type ATPases have 2 components, CF(1) - the catalytic core - and CF(0) - the membrane proton channel. In yeast, the dimeric form of ATP synthase consists of 17 polypeptides: alpha, beta, gamma, delta, epsilon, 4 (B), 5 (OSCP), 6 (A), 8, 9 (C), d, E (Tim11), f, g, h, i/j and k.</text>
</comment>
<comment type="interaction">
    <interactant intactId="EBI-9016907">
        <id>P61829</id>
    </interactant>
    <interactant intactId="EBI-9016907">
        <id>P61829</id>
        <label>OLI1</label>
    </interactant>
    <organismsDiffer>false</organismsDiffer>
    <experiments>2</experiments>
</comment>
<comment type="subcellular location">
    <subcellularLocation>
        <location evidence="4">Mitochondrion membrane</location>
        <topology evidence="4">Multi-pass membrane protein</topology>
    </subcellularLocation>
</comment>
<comment type="similarity">
    <text evidence="4">Belongs to the ATPase C chain family.</text>
</comment>